<organism>
    <name type="scientific">Gallus gallus</name>
    <name type="common">Chicken</name>
    <dbReference type="NCBI Taxonomy" id="9031"/>
    <lineage>
        <taxon>Eukaryota</taxon>
        <taxon>Metazoa</taxon>
        <taxon>Chordata</taxon>
        <taxon>Craniata</taxon>
        <taxon>Vertebrata</taxon>
        <taxon>Euteleostomi</taxon>
        <taxon>Archelosauria</taxon>
        <taxon>Archosauria</taxon>
        <taxon>Dinosauria</taxon>
        <taxon>Saurischia</taxon>
        <taxon>Theropoda</taxon>
        <taxon>Coelurosauria</taxon>
        <taxon>Aves</taxon>
        <taxon>Neognathae</taxon>
        <taxon>Galloanserae</taxon>
        <taxon>Galliformes</taxon>
        <taxon>Phasianidae</taxon>
        <taxon>Phasianinae</taxon>
        <taxon>Gallus</taxon>
    </lineage>
</organism>
<gene>
    <name type="primary">THYN1</name>
    <name type="synonym">THY28</name>
</gene>
<evidence type="ECO:0000250" key="1"/>
<evidence type="ECO:0000256" key="2">
    <source>
        <dbReference type="SAM" id="MobiDB-lite"/>
    </source>
</evidence>
<evidence type="ECO:0000269" key="3">
    <source>
    </source>
</evidence>
<evidence type="ECO:0000305" key="4"/>
<dbReference type="EMBL" id="U34350">
    <property type="protein sequence ID" value="AAA75591.1"/>
    <property type="molecule type" value="mRNA"/>
</dbReference>
<dbReference type="EMBL" id="AF499011">
    <property type="protein sequence ID" value="AAM18926.1"/>
    <property type="molecule type" value="Genomic_DNA"/>
</dbReference>
<dbReference type="RefSeq" id="NP_989618.1">
    <property type="nucleotide sequence ID" value="NM_204287.2"/>
</dbReference>
<dbReference type="RefSeq" id="XP_015153423.1">
    <property type="nucleotide sequence ID" value="XM_015297937.1"/>
</dbReference>
<dbReference type="RefSeq" id="XP_015153424.1">
    <property type="nucleotide sequence ID" value="XM_015297938.1"/>
</dbReference>
<dbReference type="SMR" id="Q90679"/>
<dbReference type="FunCoup" id="Q90679">
    <property type="interactions" value="1240"/>
</dbReference>
<dbReference type="STRING" id="9031.ENSGALP00000062196"/>
<dbReference type="PaxDb" id="9031-ENSGALP00000002322"/>
<dbReference type="GeneID" id="374161"/>
<dbReference type="KEGG" id="gga:374161"/>
<dbReference type="CTD" id="29087"/>
<dbReference type="VEuPathDB" id="HostDB:geneid_374161"/>
<dbReference type="eggNOG" id="KOG3383">
    <property type="taxonomic scope" value="Eukaryota"/>
</dbReference>
<dbReference type="HOGENOM" id="CLU_041799_2_0_1"/>
<dbReference type="InParanoid" id="Q90679"/>
<dbReference type="OrthoDB" id="41445at2759"/>
<dbReference type="PhylomeDB" id="Q90679"/>
<dbReference type="TreeFam" id="TF332126"/>
<dbReference type="PRO" id="PR:Q90679"/>
<dbReference type="Proteomes" id="UP000000539">
    <property type="component" value="Unassembled WGS sequence"/>
</dbReference>
<dbReference type="GO" id="GO:0005634">
    <property type="term" value="C:nucleus"/>
    <property type="evidence" value="ECO:0000318"/>
    <property type="project" value="GO_Central"/>
</dbReference>
<dbReference type="CDD" id="cd21133">
    <property type="entry name" value="EVE"/>
    <property type="match status" value="1"/>
</dbReference>
<dbReference type="FunFam" id="3.10.590.10:FF:000003">
    <property type="entry name" value="Thymocyte nuclear protein 1"/>
    <property type="match status" value="1"/>
</dbReference>
<dbReference type="Gene3D" id="3.10.590.10">
    <property type="entry name" value="ph1033 like domains"/>
    <property type="match status" value="1"/>
</dbReference>
<dbReference type="InterPro" id="IPR052181">
    <property type="entry name" value="5hmC_binding"/>
</dbReference>
<dbReference type="InterPro" id="IPR002740">
    <property type="entry name" value="EVE_domain"/>
</dbReference>
<dbReference type="InterPro" id="IPR015947">
    <property type="entry name" value="PUA-like_sf"/>
</dbReference>
<dbReference type="InterPro" id="IPR047197">
    <property type="entry name" value="THYN1-like_EVE"/>
</dbReference>
<dbReference type="PANTHER" id="PTHR14087">
    <property type="entry name" value="THYMOCYTE NUCLEAR PROTEIN 1"/>
    <property type="match status" value="1"/>
</dbReference>
<dbReference type="PANTHER" id="PTHR14087:SF7">
    <property type="entry name" value="THYMOCYTE NUCLEAR PROTEIN 1"/>
    <property type="match status" value="1"/>
</dbReference>
<dbReference type="Pfam" id="PF01878">
    <property type="entry name" value="EVE"/>
    <property type="match status" value="1"/>
</dbReference>
<dbReference type="SUPFAM" id="SSF88697">
    <property type="entry name" value="PUA domain-like"/>
    <property type="match status" value="1"/>
</dbReference>
<comment type="function">
    <text evidence="1">Specifically binds 5-hydroxymethylcytosine (5hmC), suggesting that it acts as a specific reader of 5hmC.</text>
</comment>
<comment type="subcellular location">
    <subcellularLocation>
        <location evidence="1">Nucleus</location>
    </subcellularLocation>
</comment>
<comment type="tissue specificity">
    <text evidence="3">Expressed at high levels in bursa of fabricus, thymus and spleen. Also found in the liver, intestine, heart and brain.</text>
</comment>
<comment type="PTM">
    <text evidence="3">Undergoes proteolytic processing during lymphocyte apoptosis.</text>
</comment>
<comment type="PTM">
    <text evidence="3">Phosphorylated.</text>
</comment>
<sequence>MPWPSRKRDKGAVADKKEPDAKIAKTEEETEDKEEEEKSTKPPAGSSKSGLKNWKKAKESDSGGEESKITYCHWLLKSEPESRLEKGVDVKFSIEDLKAQPNQTTFWEGVRNYQARNFLRAMKLGQQAFFYHSNCKEPGIVGIVKIVKEAYPDHTQFDQKDPHYDSSSRKENPKWSMVDVQFVRMTKRFIPLSEIKTHHLAHKADGGPLKNMMLFSRQRLSIQPLTQEEFDFVLSLEEEKPH</sequence>
<protein>
    <recommendedName>
        <fullName>Thymocyte nuclear protein 1</fullName>
    </recommendedName>
    <alternativeName>
        <fullName>Thymocyte protein Thy28</fullName>
        <shortName>cThy28</shortName>
    </alternativeName>
</protein>
<feature type="chain" id="PRO_0000262567" description="Thymocyte nuclear protein 1">
    <location>
        <begin position="1"/>
        <end position="242"/>
    </location>
</feature>
<feature type="region of interest" description="Disordered" evidence="2">
    <location>
        <begin position="1"/>
        <end position="64"/>
    </location>
</feature>
<feature type="short sequence motif" description="Nuclear localization signal">
    <location>
        <begin position="6"/>
        <end position="10"/>
    </location>
</feature>
<feature type="compositionally biased region" description="Basic and acidic residues" evidence="2">
    <location>
        <begin position="10"/>
        <end position="27"/>
    </location>
</feature>
<feature type="compositionally biased region" description="Acidic residues" evidence="2">
    <location>
        <begin position="28"/>
        <end position="37"/>
    </location>
</feature>
<feature type="sequence conflict" description="In Ref. 2; AAM18926." evidence="4" ref="2">
    <original>L</original>
    <variation>W</variation>
    <location>
        <position position="51"/>
    </location>
</feature>
<name>THYN1_CHICK</name>
<proteinExistence type="evidence at protein level"/>
<reference key="1">
    <citation type="journal article" date="2001" name="Apoptosis">
        <title>The analysis of cThy28 expression in avian lymphocytes.</title>
        <authorList>
            <person name="Compton M.M."/>
            <person name="Thomson J.M."/>
            <person name="Icard A.H."/>
        </authorList>
    </citation>
    <scope>NUCLEOTIDE SEQUENCE [MRNA]</scope>
    <scope>PROTEOLYTIC PROCESSING</scope>
    <scope>PHOSPHORYLATION</scope>
    <scope>TISSUE SPECIFICITY</scope>
</reference>
<reference key="2">
    <citation type="submission" date="2002-04" db="EMBL/GenBank/DDBJ databases">
        <authorList>
            <person name="Compton M.M."/>
            <person name="Wickliffe J.K."/>
            <person name="Waldrip H.W."/>
        </authorList>
    </citation>
    <scope>NUCLEOTIDE SEQUENCE [GENOMIC DNA]</scope>
</reference>
<keyword id="KW-0539">Nucleus</keyword>
<keyword id="KW-0597">Phosphoprotein</keyword>
<keyword id="KW-1185">Reference proteome</keyword>
<accession>Q90679</accession>
<accession>Q8QG66</accession>